<reference key="1">
    <citation type="journal article" date="2007" name="PLoS Genet.">
        <title>The complete genome sequence of Yersinia pseudotuberculosis IP31758, the causative agent of Far East scarlet-like fever.</title>
        <authorList>
            <person name="Eppinger M."/>
            <person name="Rosovitz M.J."/>
            <person name="Fricke W.F."/>
            <person name="Rasko D.A."/>
            <person name="Kokorina G."/>
            <person name="Fayolle C."/>
            <person name="Lindler L.E."/>
            <person name="Carniel E."/>
            <person name="Ravel J."/>
        </authorList>
    </citation>
    <scope>NUCLEOTIDE SEQUENCE [LARGE SCALE GENOMIC DNA]</scope>
    <source>
        <strain>IP 31758</strain>
    </source>
</reference>
<accession>A7FPE1</accession>
<sequence>MAGAKEIRSKIASVQNTQKITKAMEMVAASKMRKSQERMAASRPYAETMRSVIGHLALGNLEYKHPYLEERDVKRVGYLVVSTDRGLCGGLNINLFKRLLAEMKGWSEKGVECDLALIGSKAASFFGSVGGKIVAQVTGMGDNPSLSELIGPVKVMLQAYDEGRLDKLYIVNNKFINTMSQEPRIMQLLPLPPAEDGELKKKSWDYLYEPDPKALLDTLLRRYVESQVYQGVVENLASEQAARMVAMKAATDNGGSLIKELQLVYNKARQASITQELTEIVGGASAV</sequence>
<keyword id="KW-0066">ATP synthesis</keyword>
<keyword id="KW-0997">Cell inner membrane</keyword>
<keyword id="KW-1003">Cell membrane</keyword>
<keyword id="KW-0139">CF(1)</keyword>
<keyword id="KW-0375">Hydrogen ion transport</keyword>
<keyword id="KW-0406">Ion transport</keyword>
<keyword id="KW-0472">Membrane</keyword>
<keyword id="KW-0813">Transport</keyword>
<comment type="function">
    <text evidence="1">Produces ATP from ADP in the presence of a proton gradient across the membrane. The gamma chain is believed to be important in regulating ATPase activity and the flow of protons through the CF(0) complex.</text>
</comment>
<comment type="subunit">
    <text evidence="1">F-type ATPases have 2 components, CF(1) - the catalytic core - and CF(0) - the membrane proton channel. CF(1) has five subunits: alpha(3), beta(3), gamma(1), delta(1), epsilon(1). CF(0) has three main subunits: a, b and c.</text>
</comment>
<comment type="subcellular location">
    <subcellularLocation>
        <location evidence="1">Cell inner membrane</location>
        <topology evidence="1">Peripheral membrane protein</topology>
    </subcellularLocation>
</comment>
<comment type="similarity">
    <text evidence="1">Belongs to the ATPase gamma chain family.</text>
</comment>
<feature type="chain" id="PRO_1000062295" description="ATP synthase gamma chain">
    <location>
        <begin position="1"/>
        <end position="287"/>
    </location>
</feature>
<proteinExistence type="inferred from homology"/>
<evidence type="ECO:0000255" key="1">
    <source>
        <dbReference type="HAMAP-Rule" id="MF_00815"/>
    </source>
</evidence>
<name>ATPG_YERP3</name>
<dbReference type="EMBL" id="CP000720">
    <property type="protein sequence ID" value="ABS47330.1"/>
    <property type="molecule type" value="Genomic_DNA"/>
</dbReference>
<dbReference type="RefSeq" id="WP_002220756.1">
    <property type="nucleotide sequence ID" value="NC_009708.1"/>
</dbReference>
<dbReference type="SMR" id="A7FPE1"/>
<dbReference type="GeneID" id="96663460"/>
<dbReference type="KEGG" id="ypi:YpsIP31758_4177"/>
<dbReference type="HOGENOM" id="CLU_050669_0_1_6"/>
<dbReference type="Proteomes" id="UP000002412">
    <property type="component" value="Chromosome"/>
</dbReference>
<dbReference type="GO" id="GO:0005886">
    <property type="term" value="C:plasma membrane"/>
    <property type="evidence" value="ECO:0007669"/>
    <property type="project" value="UniProtKB-SubCell"/>
</dbReference>
<dbReference type="GO" id="GO:0045259">
    <property type="term" value="C:proton-transporting ATP synthase complex"/>
    <property type="evidence" value="ECO:0007669"/>
    <property type="project" value="UniProtKB-KW"/>
</dbReference>
<dbReference type="GO" id="GO:0005524">
    <property type="term" value="F:ATP binding"/>
    <property type="evidence" value="ECO:0007669"/>
    <property type="project" value="UniProtKB-UniRule"/>
</dbReference>
<dbReference type="GO" id="GO:0046933">
    <property type="term" value="F:proton-transporting ATP synthase activity, rotational mechanism"/>
    <property type="evidence" value="ECO:0007669"/>
    <property type="project" value="UniProtKB-UniRule"/>
</dbReference>
<dbReference type="GO" id="GO:0042777">
    <property type="term" value="P:proton motive force-driven plasma membrane ATP synthesis"/>
    <property type="evidence" value="ECO:0007669"/>
    <property type="project" value="UniProtKB-UniRule"/>
</dbReference>
<dbReference type="CDD" id="cd12151">
    <property type="entry name" value="F1-ATPase_gamma"/>
    <property type="match status" value="1"/>
</dbReference>
<dbReference type="FunFam" id="1.10.287.80:FF:000005">
    <property type="entry name" value="ATP synthase gamma chain"/>
    <property type="match status" value="2"/>
</dbReference>
<dbReference type="FunFam" id="3.40.1380.10:FF:000001">
    <property type="entry name" value="ATP synthase gamma chain"/>
    <property type="match status" value="1"/>
</dbReference>
<dbReference type="Gene3D" id="3.40.1380.10">
    <property type="match status" value="1"/>
</dbReference>
<dbReference type="Gene3D" id="1.10.287.80">
    <property type="entry name" value="ATP synthase, gamma subunit, helix hairpin domain"/>
    <property type="match status" value="1"/>
</dbReference>
<dbReference type="HAMAP" id="MF_00815">
    <property type="entry name" value="ATP_synth_gamma_bact"/>
    <property type="match status" value="1"/>
</dbReference>
<dbReference type="InterPro" id="IPR035968">
    <property type="entry name" value="ATP_synth_F1_ATPase_gsu"/>
</dbReference>
<dbReference type="InterPro" id="IPR000131">
    <property type="entry name" value="ATP_synth_F1_gsu"/>
</dbReference>
<dbReference type="InterPro" id="IPR023632">
    <property type="entry name" value="ATP_synth_F1_gsu_CS"/>
</dbReference>
<dbReference type="NCBIfam" id="TIGR01146">
    <property type="entry name" value="ATPsyn_F1gamma"/>
    <property type="match status" value="1"/>
</dbReference>
<dbReference type="NCBIfam" id="NF004144">
    <property type="entry name" value="PRK05621.1-1"/>
    <property type="match status" value="1"/>
</dbReference>
<dbReference type="PANTHER" id="PTHR11693">
    <property type="entry name" value="ATP SYNTHASE GAMMA CHAIN"/>
    <property type="match status" value="1"/>
</dbReference>
<dbReference type="PANTHER" id="PTHR11693:SF22">
    <property type="entry name" value="ATP SYNTHASE SUBUNIT GAMMA, MITOCHONDRIAL"/>
    <property type="match status" value="1"/>
</dbReference>
<dbReference type="Pfam" id="PF00231">
    <property type="entry name" value="ATP-synt"/>
    <property type="match status" value="1"/>
</dbReference>
<dbReference type="PRINTS" id="PR00126">
    <property type="entry name" value="ATPASEGAMMA"/>
</dbReference>
<dbReference type="SUPFAM" id="SSF52943">
    <property type="entry name" value="ATP synthase (F1-ATPase), gamma subunit"/>
    <property type="match status" value="1"/>
</dbReference>
<dbReference type="PROSITE" id="PS00153">
    <property type="entry name" value="ATPASE_GAMMA"/>
    <property type="match status" value="1"/>
</dbReference>
<protein>
    <recommendedName>
        <fullName evidence="1">ATP synthase gamma chain</fullName>
    </recommendedName>
    <alternativeName>
        <fullName evidence="1">ATP synthase F1 sector gamma subunit</fullName>
    </alternativeName>
    <alternativeName>
        <fullName evidence="1">F-ATPase gamma subunit</fullName>
    </alternativeName>
</protein>
<organism>
    <name type="scientific">Yersinia pseudotuberculosis serotype O:1b (strain IP 31758)</name>
    <dbReference type="NCBI Taxonomy" id="349747"/>
    <lineage>
        <taxon>Bacteria</taxon>
        <taxon>Pseudomonadati</taxon>
        <taxon>Pseudomonadota</taxon>
        <taxon>Gammaproteobacteria</taxon>
        <taxon>Enterobacterales</taxon>
        <taxon>Yersiniaceae</taxon>
        <taxon>Yersinia</taxon>
    </lineage>
</organism>
<gene>
    <name evidence="1" type="primary">atpG</name>
    <name type="ordered locus">YpsIP31758_4177</name>
</gene>